<reference key="1">
    <citation type="journal article" date="1998" name="Science">
        <title>Genome sequence of the nematode C. elegans: a platform for investigating biology.</title>
        <authorList>
            <consortium name="The C. elegans sequencing consortium"/>
        </authorList>
    </citation>
    <scope>NUCLEOTIDE SEQUENCE [LARGE SCALE GENOMIC DNA]</scope>
    <source>
        <strain>Bristol N2</strain>
    </source>
</reference>
<evidence type="ECO:0000255" key="1">
    <source>
        <dbReference type="PROSITE-ProRule" id="PRU00318"/>
    </source>
</evidence>
<evidence type="ECO:0000256" key="2">
    <source>
        <dbReference type="SAM" id="MobiDB-lite"/>
    </source>
</evidence>
<gene>
    <name type="primary">puf-12</name>
    <name type="ORF">ZK945.3</name>
</gene>
<sequence>MVKLDDKNKKFKGKKKVKNVLEKKAKGLKLNKVDRKRIVKIEEKAALKSKVDKAVKDELERLKKSSSTSVFDNDGTRDSLCSESSFGSQPAPKKKSKKVLFSGELEHVKVFDKRVQDLQIKPSEASPGRGILRSPLDKKVKKLAKVKTVKVAQEEEEEHSAPPKKKVKVNAEKAVASEPADDENLESVDEQAGGDESHIDIPTLKRKRVAIQVTKSVKEQLLNMPRKERKAFLKELKLKRKPEGARAQKCKELWEKIRMGKTPKAEKDTAVHELYGLVKGHAAKLIYAHDTSRVIECLVATEREGIINNLFNELTPEIVRMSKNVYSKFFVKKMLKNGTKEQRDIIINAFRGHAPTLLRIKHAAEVLEYAYNDFANAHQRYNIITEFYGKEFILFREDNIRSLTEILAEKPEKKVVILKHLDEVIGAVNEKETLRLSILHKLMLDFFDNCDEEKKINLLDSLKDKIPEFIHTPDGAKLAIKLIWFAPVKERKLIVKNFKDLSVKAAMEHYGHRVLLALFDTVDDTVLLNKVIVSELANEMKKLIEDDWGEKVIHYLVHPRDGRGIDKREITFLAEGDSNPHSKKTQKDRYGQLYAGITENLYPYLAANFEELVFEANKSKFVAACLETTSSFDLFDRQVPAEARKSCNQAIVELAKKDFVPMDQEGFHIIEHQSGNFILMAVMRCDAALQEDERLSVALAEGLTSKQLGSWVTCNRGCHVLLKMLQVGGPKVIEKLKASISRKHLDGYNSKGANLLKAQLDGNVKK</sequence>
<protein>
    <recommendedName>
        <fullName>Pumilio domain-containing protein 12</fullName>
    </recommendedName>
</protein>
<proteinExistence type="predicted"/>
<dbReference type="EMBL" id="Z48544">
    <property type="protein sequence ID" value="CAA88437.1"/>
    <property type="molecule type" value="Genomic_DNA"/>
</dbReference>
<dbReference type="PIR" id="T28120">
    <property type="entry name" value="T28120"/>
</dbReference>
<dbReference type="RefSeq" id="NP_496178.1">
    <property type="nucleotide sequence ID" value="NM_063777.8"/>
</dbReference>
<dbReference type="SMR" id="Q09622"/>
<dbReference type="BioGRID" id="39891">
    <property type="interactions" value="11"/>
</dbReference>
<dbReference type="FunCoup" id="Q09622">
    <property type="interactions" value="2293"/>
</dbReference>
<dbReference type="STRING" id="6239.ZK945.3.1"/>
<dbReference type="PaxDb" id="6239-ZK945.3"/>
<dbReference type="PeptideAtlas" id="Q09622"/>
<dbReference type="EnsemblMetazoa" id="ZK945.3.1">
    <property type="protein sequence ID" value="ZK945.3.1"/>
    <property type="gene ID" value="WBGene00014165"/>
</dbReference>
<dbReference type="GeneID" id="174572"/>
<dbReference type="KEGG" id="cel:CELE_ZK945.3"/>
<dbReference type="AGR" id="WB:WBGene00014165"/>
<dbReference type="CTD" id="174572"/>
<dbReference type="WormBase" id="ZK945.3">
    <property type="protein sequence ID" value="CE01734"/>
    <property type="gene ID" value="WBGene00014165"/>
    <property type="gene designation" value="puf-12"/>
</dbReference>
<dbReference type="eggNOG" id="KOG2050">
    <property type="taxonomic scope" value="Eukaryota"/>
</dbReference>
<dbReference type="GeneTree" id="ENSGT00390000015757"/>
<dbReference type="HOGENOM" id="CLU_013994_0_1_1"/>
<dbReference type="InParanoid" id="Q09622"/>
<dbReference type="OMA" id="RCRRTEN"/>
<dbReference type="OrthoDB" id="497380at2759"/>
<dbReference type="PhylomeDB" id="Q09622"/>
<dbReference type="PRO" id="PR:Q09622"/>
<dbReference type="Proteomes" id="UP000001940">
    <property type="component" value="Chromosome II"/>
</dbReference>
<dbReference type="Bgee" id="WBGene00014165">
    <property type="expression patterns" value="Expressed in larva and 4 other cell types or tissues"/>
</dbReference>
<dbReference type="GO" id="GO:0005730">
    <property type="term" value="C:nucleolus"/>
    <property type="evidence" value="ECO:0000318"/>
    <property type="project" value="GO_Central"/>
</dbReference>
<dbReference type="GO" id="GO:0003729">
    <property type="term" value="F:mRNA binding"/>
    <property type="evidence" value="ECO:0000318"/>
    <property type="project" value="GO_Central"/>
</dbReference>
<dbReference type="GO" id="GO:0006417">
    <property type="term" value="P:regulation of translation"/>
    <property type="evidence" value="ECO:0000318"/>
    <property type="project" value="GO_Central"/>
</dbReference>
<dbReference type="FunFam" id="1.25.10.10:FF:000632">
    <property type="entry name" value="Pumilio domain-containing protein"/>
    <property type="match status" value="1"/>
</dbReference>
<dbReference type="FunFam" id="1.25.10.10:FF:001052">
    <property type="entry name" value="Pumilio domain-containing protein 12"/>
    <property type="match status" value="1"/>
</dbReference>
<dbReference type="Gene3D" id="1.25.10.10">
    <property type="entry name" value="Leucine-rich Repeat Variant"/>
    <property type="match status" value="2"/>
</dbReference>
<dbReference type="InterPro" id="IPR011989">
    <property type="entry name" value="ARM-like"/>
</dbReference>
<dbReference type="InterPro" id="IPR016024">
    <property type="entry name" value="ARM-type_fold"/>
</dbReference>
<dbReference type="InterPro" id="IPR012959">
    <property type="entry name" value="CPL_dom"/>
</dbReference>
<dbReference type="InterPro" id="IPR033133">
    <property type="entry name" value="PUM-HD"/>
</dbReference>
<dbReference type="InterPro" id="IPR040059">
    <property type="entry name" value="PUM3"/>
</dbReference>
<dbReference type="InterPro" id="IPR001313">
    <property type="entry name" value="Pumilio_RNA-bd_rpt"/>
</dbReference>
<dbReference type="PANTHER" id="PTHR13389">
    <property type="entry name" value="PUMILIO HOMOLOG 3"/>
    <property type="match status" value="1"/>
</dbReference>
<dbReference type="PANTHER" id="PTHR13389:SF0">
    <property type="entry name" value="PUMILIO HOMOLOG 3"/>
    <property type="match status" value="1"/>
</dbReference>
<dbReference type="Pfam" id="PF08144">
    <property type="entry name" value="CPL"/>
    <property type="match status" value="1"/>
</dbReference>
<dbReference type="SMART" id="SM00025">
    <property type="entry name" value="Pumilio"/>
    <property type="match status" value="4"/>
</dbReference>
<dbReference type="SUPFAM" id="SSF48371">
    <property type="entry name" value="ARM repeat"/>
    <property type="match status" value="1"/>
</dbReference>
<dbReference type="PROSITE" id="PS50302">
    <property type="entry name" value="PUM"/>
    <property type="match status" value="4"/>
</dbReference>
<dbReference type="PROSITE" id="PS50303">
    <property type="entry name" value="PUM_HD"/>
    <property type="match status" value="1"/>
</dbReference>
<organism>
    <name type="scientific">Caenorhabditis elegans</name>
    <dbReference type="NCBI Taxonomy" id="6239"/>
    <lineage>
        <taxon>Eukaryota</taxon>
        <taxon>Metazoa</taxon>
        <taxon>Ecdysozoa</taxon>
        <taxon>Nematoda</taxon>
        <taxon>Chromadorea</taxon>
        <taxon>Rhabditida</taxon>
        <taxon>Rhabditina</taxon>
        <taxon>Rhabditomorpha</taxon>
        <taxon>Rhabditoidea</taxon>
        <taxon>Rhabditidae</taxon>
        <taxon>Peloderinae</taxon>
        <taxon>Caenorhabditis</taxon>
    </lineage>
</organism>
<keyword id="KW-1185">Reference proteome</keyword>
<keyword id="KW-0677">Repeat</keyword>
<keyword id="KW-0694">RNA-binding</keyword>
<accession>Q09622</accession>
<feature type="chain" id="PRO_0000075934" description="Pumilio domain-containing protein 12">
    <location>
        <begin position="1"/>
        <end position="766"/>
    </location>
</feature>
<feature type="domain" description="PUM-HD" evidence="1">
    <location>
        <begin position="245"/>
        <end position="602"/>
    </location>
</feature>
<feature type="repeat" description="Pumilio 1">
    <location>
        <begin position="313"/>
        <end position="348"/>
    </location>
</feature>
<feature type="repeat" description="Pumilio 2">
    <location>
        <begin position="461"/>
        <end position="496"/>
    </location>
</feature>
<feature type="repeat" description="Pumilio 3">
    <location>
        <begin position="497"/>
        <end position="534"/>
    </location>
</feature>
<feature type="repeat" description="Pumilio 4">
    <location>
        <begin position="535"/>
        <end position="571"/>
    </location>
</feature>
<feature type="region of interest" description="Disordered" evidence="2">
    <location>
        <begin position="63"/>
        <end position="98"/>
    </location>
</feature>
<feature type="region of interest" description="Disordered" evidence="2">
    <location>
        <begin position="152"/>
        <end position="197"/>
    </location>
</feature>
<feature type="compositionally biased region" description="Polar residues" evidence="2">
    <location>
        <begin position="79"/>
        <end position="88"/>
    </location>
</feature>
<feature type="compositionally biased region" description="Acidic residues" evidence="2">
    <location>
        <begin position="179"/>
        <end position="193"/>
    </location>
</feature>
<name>PUF12_CAEEL</name>